<accession>P70083</accession>
<accession>P70084</accession>
<accession>Q91100</accession>
<accession>Q92082</accession>
<protein>
    <recommendedName>
        <fullName>Sarcoplasmic/endoplasmic reticulum calcium ATPase 1</fullName>
        <shortName>SERCA1</shortName>
        <shortName>SR Ca(2+)-ATPase 1</shortName>
        <ecNumber evidence="1">7.2.2.10</ecNumber>
    </recommendedName>
    <alternativeName>
        <fullName>Calcium pump 1</fullName>
    </alternativeName>
    <alternativeName>
        <fullName>Calcium-transporting ATPase sarcoplasmic reticulum type, fast twitch skeletal muscle isoform</fullName>
    </alternativeName>
    <alternativeName>
        <fullName>Endoplasmic reticulum class 1/2 Ca(2+) ATPase</fullName>
    </alternativeName>
</protein>
<gene>
    <name type="primary">atp2a1</name>
</gene>
<feature type="chain" id="PRO_0000046192" description="Sarcoplasmic/endoplasmic reticulum calcium ATPase 1">
    <location>
        <begin position="1"/>
        <end position="996"/>
    </location>
</feature>
<feature type="topological domain" description="Cytoplasmic" evidence="4">
    <location>
        <begin position="1"/>
        <end position="48"/>
    </location>
</feature>
<feature type="transmembrane region" description="Helical; Name=1" evidence="1">
    <location>
        <begin position="49"/>
        <end position="69"/>
    </location>
</feature>
<feature type="topological domain" description="Lumenal" evidence="4">
    <location>
        <begin position="70"/>
        <end position="89"/>
    </location>
</feature>
<feature type="transmembrane region" description="Helical; Name=2" evidence="1">
    <location>
        <begin position="90"/>
        <end position="110"/>
    </location>
</feature>
<feature type="topological domain" description="Cytoplasmic" evidence="4">
    <location>
        <begin position="111"/>
        <end position="253"/>
    </location>
</feature>
<feature type="transmembrane region" description="Helical; Name=3" evidence="1">
    <location>
        <begin position="254"/>
        <end position="273"/>
    </location>
</feature>
<feature type="topological domain" description="Lumenal" evidence="4">
    <location>
        <begin position="274"/>
        <end position="295"/>
    </location>
</feature>
<feature type="transmembrane region" description="Helical; Name=4" evidence="1">
    <location>
        <begin position="296"/>
        <end position="313"/>
    </location>
</feature>
<feature type="topological domain" description="Cytoplasmic" evidence="4">
    <location>
        <begin position="314"/>
        <end position="754"/>
    </location>
</feature>
<feature type="transmembrane region" description="Helical; Name=5" evidence="1">
    <location>
        <begin position="755"/>
        <end position="774"/>
    </location>
</feature>
<feature type="topological domain" description="Lumenal" evidence="4">
    <location>
        <begin position="775"/>
        <end position="784"/>
    </location>
</feature>
<feature type="transmembrane region" description="Helical; Name=6" evidence="1">
    <location>
        <begin position="785"/>
        <end position="805"/>
    </location>
</feature>
<feature type="topological domain" description="Cytoplasmic" evidence="4">
    <location>
        <begin position="806"/>
        <end position="825"/>
    </location>
</feature>
<feature type="transmembrane region" description="Helical; Name=7" evidence="1">
    <location>
        <begin position="826"/>
        <end position="848"/>
    </location>
</feature>
<feature type="topological domain" description="Lumenal" evidence="4">
    <location>
        <begin position="849"/>
        <end position="894"/>
    </location>
</feature>
<feature type="transmembrane region" description="Helical; Name=8" evidence="1">
    <location>
        <begin position="895"/>
        <end position="914"/>
    </location>
</feature>
<feature type="topological domain" description="Cytoplasmic" evidence="4">
    <location>
        <begin position="915"/>
        <end position="927"/>
    </location>
</feature>
<feature type="transmembrane region" description="Helical; Name=9" evidence="1">
    <location>
        <begin position="928"/>
        <end position="946"/>
    </location>
</feature>
<feature type="topological domain" description="Lumenal" evidence="4">
    <location>
        <begin position="947"/>
        <end position="961"/>
    </location>
</feature>
<feature type="transmembrane region" description="Helical; Name=10" evidence="1">
    <location>
        <begin position="962"/>
        <end position="982"/>
    </location>
</feature>
<feature type="topological domain" description="Cytoplasmic" evidence="4">
    <location>
        <begin position="983"/>
        <end position="996"/>
    </location>
</feature>
<feature type="region of interest" description="Interaction with PLN" evidence="1">
    <location>
        <begin position="785"/>
        <end position="805"/>
    </location>
</feature>
<feature type="region of interest" description="Interaction with PLN" evidence="1">
    <location>
        <begin position="929"/>
        <end position="940"/>
    </location>
</feature>
<feature type="active site" description="4-aspartylphosphate intermediate" evidence="1">
    <location>
        <position position="351"/>
    </location>
</feature>
<feature type="binding site" evidence="1">
    <location>
        <position position="304"/>
    </location>
    <ligand>
        <name>Ca(2+)</name>
        <dbReference type="ChEBI" id="CHEBI:29108"/>
        <label>1</label>
    </ligand>
</feature>
<feature type="binding site" evidence="1">
    <location>
        <position position="305"/>
    </location>
    <ligand>
        <name>Ca(2+)</name>
        <dbReference type="ChEBI" id="CHEBI:29108"/>
        <label>1</label>
    </ligand>
</feature>
<feature type="binding site" evidence="1">
    <location>
        <position position="307"/>
    </location>
    <ligand>
        <name>Ca(2+)</name>
        <dbReference type="ChEBI" id="CHEBI:29108"/>
        <label>1</label>
    </ligand>
</feature>
<feature type="binding site" evidence="1">
    <location>
        <position position="309"/>
    </location>
    <ligand>
        <name>Ca(2+)</name>
        <dbReference type="ChEBI" id="CHEBI:29108"/>
        <label>1</label>
    </ligand>
</feature>
<feature type="binding site" evidence="1">
    <location>
        <position position="351"/>
    </location>
    <ligand>
        <name>Mg(2+)</name>
        <dbReference type="ChEBI" id="CHEBI:18420"/>
    </ligand>
</feature>
<feature type="binding site" evidence="1">
    <location>
        <position position="353"/>
    </location>
    <ligand>
        <name>ATP</name>
        <dbReference type="ChEBI" id="CHEBI:30616"/>
    </ligand>
</feature>
<feature type="binding site" evidence="1">
    <location>
        <position position="353"/>
    </location>
    <ligand>
        <name>Mg(2+)</name>
        <dbReference type="ChEBI" id="CHEBI:18420"/>
    </ligand>
</feature>
<feature type="binding site" evidence="1">
    <location>
        <position position="442"/>
    </location>
    <ligand>
        <name>ATP</name>
        <dbReference type="ChEBI" id="CHEBI:30616"/>
    </ligand>
</feature>
<feature type="binding site" evidence="1">
    <location>
        <position position="489"/>
    </location>
    <ligand>
        <name>ATP</name>
        <dbReference type="ChEBI" id="CHEBI:30616"/>
    </ligand>
</feature>
<feature type="binding site" evidence="1">
    <location>
        <position position="512"/>
    </location>
    <ligand>
        <name>ATP</name>
        <dbReference type="ChEBI" id="CHEBI:30616"/>
    </ligand>
</feature>
<feature type="binding site" evidence="1">
    <location>
        <position position="557"/>
    </location>
    <ligand>
        <name>ATP</name>
        <dbReference type="ChEBI" id="CHEBI:30616"/>
    </ligand>
</feature>
<feature type="binding site" evidence="1">
    <location>
        <position position="622"/>
    </location>
    <ligand>
        <name>ATP</name>
        <dbReference type="ChEBI" id="CHEBI:30616"/>
    </ligand>
</feature>
<feature type="binding site" evidence="1">
    <location>
        <position position="623"/>
    </location>
    <ligand>
        <name>ATP</name>
        <dbReference type="ChEBI" id="CHEBI:30616"/>
    </ligand>
</feature>
<feature type="binding site" evidence="1">
    <location>
        <position position="624"/>
    </location>
    <ligand>
        <name>ATP</name>
        <dbReference type="ChEBI" id="CHEBI:30616"/>
    </ligand>
</feature>
<feature type="binding site" evidence="1">
    <location>
        <position position="675"/>
    </location>
    <ligand>
        <name>ATP</name>
        <dbReference type="ChEBI" id="CHEBI:30616"/>
    </ligand>
</feature>
<feature type="binding site" evidence="1">
    <location>
        <position position="681"/>
    </location>
    <ligand>
        <name>ATP</name>
        <dbReference type="ChEBI" id="CHEBI:30616"/>
    </ligand>
</feature>
<feature type="binding site" evidence="1">
    <location>
        <position position="700"/>
    </location>
    <ligand>
        <name>Mg(2+)</name>
        <dbReference type="ChEBI" id="CHEBI:18420"/>
    </ligand>
</feature>
<feature type="binding site" evidence="1">
    <location>
        <position position="703"/>
    </location>
    <ligand>
        <name>ATP</name>
        <dbReference type="ChEBI" id="CHEBI:30616"/>
    </ligand>
</feature>
<feature type="binding site" evidence="1">
    <location>
        <position position="765"/>
    </location>
    <ligand>
        <name>Ca(2+)</name>
        <dbReference type="ChEBI" id="CHEBI:29108"/>
        <label>2</label>
    </ligand>
</feature>
<feature type="binding site" evidence="1">
    <location>
        <position position="768"/>
    </location>
    <ligand>
        <name>Ca(2+)</name>
        <dbReference type="ChEBI" id="CHEBI:29108"/>
        <label>2</label>
    </ligand>
</feature>
<feature type="binding site" evidence="1">
    <location>
        <position position="793"/>
    </location>
    <ligand>
        <name>Ca(2+)</name>
        <dbReference type="ChEBI" id="CHEBI:29108"/>
        <label>1</label>
    </ligand>
</feature>
<feature type="binding site" evidence="1">
    <location>
        <position position="796"/>
    </location>
    <ligand>
        <name>Ca(2+)</name>
        <dbReference type="ChEBI" id="CHEBI:29108"/>
        <label>2</label>
    </ligand>
</feature>
<feature type="binding site" evidence="1">
    <location>
        <position position="797"/>
    </location>
    <ligand>
        <name>Ca(2+)</name>
        <dbReference type="ChEBI" id="CHEBI:29108"/>
        <label>1</label>
    </ligand>
</feature>
<feature type="binding site" evidence="1">
    <location>
        <position position="797"/>
    </location>
    <ligand>
        <name>Ca(2+)</name>
        <dbReference type="ChEBI" id="CHEBI:29108"/>
        <label>2</label>
    </ligand>
</feature>
<feature type="binding site" evidence="1">
    <location>
        <position position="905"/>
    </location>
    <ligand>
        <name>Ca(2+)</name>
        <dbReference type="ChEBI" id="CHEBI:29108"/>
        <label>2</label>
    </ligand>
</feature>
<feature type="disulfide bond" evidence="1">
    <location>
        <begin position="873"/>
        <end position="885"/>
    </location>
</feature>
<feature type="splice variant" id="VSP_000357" description="In isoform SERCA1A." evidence="3">
    <original>TGKEVK</original>
    <variation>K</variation>
    <location>
        <begin position="991"/>
        <end position="996"/>
    </location>
</feature>
<feature type="sequence conflict" description="In Ref. 1; AAB08097." evidence="4" ref="1">
    <original>D</original>
    <variation>Y</variation>
    <location>
        <position position="577"/>
    </location>
</feature>
<name>AT2A1_MAKNI</name>
<reference key="1">
    <citation type="journal article" date="2000" name="Comp. Biochem. Physiol.">
        <title>Cloning of a neonatal calcium atpase isoform (SERCA 1B) from extraocular muscle of adult blue marlin (Makaira nigricans).</title>
        <authorList>
            <person name="Londraville R.L."/>
            <person name="Cramer T.D."/>
            <person name="Franck J.P.C.F."/>
            <person name="Tullis A."/>
            <person name="Block B.A."/>
        </authorList>
    </citation>
    <scope>NUCLEOTIDE SEQUENCE [MRNA] (ISOFORMS SERCA1A AND SERCA1B)</scope>
    <source>
        <tissue>Extraocular muscle</tissue>
    </source>
</reference>
<reference key="2">
    <citation type="journal article" date="1996" name="Am. J. Physiol.">
        <title>Expression of sarcoplasmic reticulum Ca(2+)-ATPase isoforms in marlin and swordfish muscle and heater cells.</title>
        <authorList>
            <person name="Tullis A."/>
            <person name="Block B.A."/>
        </authorList>
    </citation>
    <scope>NUCLEOTIDE SEQUENCE [MRNA] OF 349-438 AND 448-578</scope>
    <source>
        <tissue>Heating tissue</tissue>
        <tissue>Muscle</tissue>
    </source>
</reference>
<proteinExistence type="evidence at transcript level"/>
<dbReference type="EC" id="7.2.2.10" evidence="1"/>
<dbReference type="EMBL" id="U65229">
    <property type="protein sequence ID" value="AAB08098.1"/>
    <property type="molecule type" value="mRNA"/>
</dbReference>
<dbReference type="EMBL" id="U65228">
    <property type="protein sequence ID" value="AAB08097.1"/>
    <property type="molecule type" value="mRNA"/>
</dbReference>
<dbReference type="EMBL" id="U58321">
    <property type="protein sequence ID" value="AAB17073.1"/>
    <property type="molecule type" value="mRNA"/>
</dbReference>
<dbReference type="EMBL" id="U58327">
    <property type="protein sequence ID" value="AAB17075.1"/>
    <property type="molecule type" value="mRNA"/>
</dbReference>
<dbReference type="SMR" id="P70083"/>
<dbReference type="GO" id="GO:0005783">
    <property type="term" value="C:endoplasmic reticulum"/>
    <property type="evidence" value="ECO:0000250"/>
    <property type="project" value="UniProtKB"/>
</dbReference>
<dbReference type="GO" id="GO:0005789">
    <property type="term" value="C:endoplasmic reticulum membrane"/>
    <property type="evidence" value="ECO:0000250"/>
    <property type="project" value="UniProtKB"/>
</dbReference>
<dbReference type="GO" id="GO:0005793">
    <property type="term" value="C:endoplasmic reticulum-Golgi intermediate compartment"/>
    <property type="evidence" value="ECO:0000250"/>
    <property type="project" value="UniProtKB"/>
</dbReference>
<dbReference type="GO" id="GO:0031673">
    <property type="term" value="C:H zone"/>
    <property type="evidence" value="ECO:0000250"/>
    <property type="project" value="UniProtKB"/>
</dbReference>
<dbReference type="GO" id="GO:0031674">
    <property type="term" value="C:I band"/>
    <property type="evidence" value="ECO:0000250"/>
    <property type="project" value="UniProtKB"/>
</dbReference>
<dbReference type="GO" id="GO:0016020">
    <property type="term" value="C:membrane"/>
    <property type="evidence" value="ECO:0000250"/>
    <property type="project" value="UniProtKB"/>
</dbReference>
<dbReference type="GO" id="GO:0048471">
    <property type="term" value="C:perinuclear region of cytoplasm"/>
    <property type="evidence" value="ECO:0000250"/>
    <property type="project" value="UniProtKB"/>
</dbReference>
<dbReference type="GO" id="GO:0016529">
    <property type="term" value="C:sarcoplasmic reticulum"/>
    <property type="evidence" value="ECO:0000250"/>
    <property type="project" value="UniProtKB"/>
</dbReference>
<dbReference type="GO" id="GO:0033017">
    <property type="term" value="C:sarcoplasmic reticulum membrane"/>
    <property type="evidence" value="ECO:0000250"/>
    <property type="project" value="UniProtKB"/>
</dbReference>
<dbReference type="GO" id="GO:0005524">
    <property type="term" value="F:ATP binding"/>
    <property type="evidence" value="ECO:0000250"/>
    <property type="project" value="UniProtKB"/>
</dbReference>
<dbReference type="GO" id="GO:0016887">
    <property type="term" value="F:ATP hydrolysis activity"/>
    <property type="evidence" value="ECO:0007669"/>
    <property type="project" value="InterPro"/>
</dbReference>
<dbReference type="GO" id="GO:0005509">
    <property type="term" value="F:calcium ion binding"/>
    <property type="evidence" value="ECO:0000250"/>
    <property type="project" value="UniProtKB"/>
</dbReference>
<dbReference type="GO" id="GO:0005388">
    <property type="term" value="F:P-type calcium transporter activity"/>
    <property type="evidence" value="ECO:0000250"/>
    <property type="project" value="UniProtKB"/>
</dbReference>
<dbReference type="GO" id="GO:1990036">
    <property type="term" value="P:calcium ion import into sarcoplasmic reticulum"/>
    <property type="evidence" value="ECO:0000250"/>
    <property type="project" value="UniProtKB"/>
</dbReference>
<dbReference type="GO" id="GO:0006816">
    <property type="term" value="P:calcium ion transport"/>
    <property type="evidence" value="ECO:0000250"/>
    <property type="project" value="UniProtKB"/>
</dbReference>
<dbReference type="GO" id="GO:0045988">
    <property type="term" value="P:negative regulation of striated muscle contraction"/>
    <property type="evidence" value="ECO:0000250"/>
    <property type="project" value="UniProtKB"/>
</dbReference>
<dbReference type="GO" id="GO:0031448">
    <property type="term" value="P:positive regulation of fast-twitch skeletal muscle fiber contraction"/>
    <property type="evidence" value="ECO:0000250"/>
    <property type="project" value="UniProtKB"/>
</dbReference>
<dbReference type="GO" id="GO:0006942">
    <property type="term" value="P:regulation of striated muscle contraction"/>
    <property type="evidence" value="ECO:0000250"/>
    <property type="project" value="UniProtKB"/>
</dbReference>
<dbReference type="CDD" id="cd02083">
    <property type="entry name" value="P-type_ATPase_SERCA"/>
    <property type="match status" value="1"/>
</dbReference>
<dbReference type="FunFam" id="3.40.1110.10:FF:000003">
    <property type="entry name" value="Calcium-transporting ATPase"/>
    <property type="match status" value="1"/>
</dbReference>
<dbReference type="FunFam" id="3.40.50.1000:FF:000005">
    <property type="entry name" value="Calcium-transporting ATPase 1"/>
    <property type="match status" value="1"/>
</dbReference>
<dbReference type="FunFam" id="1.20.1110.10:FF:000065">
    <property type="entry name" value="Sarcoplasmic/endoplasmic reticulum calcium ATPase 1"/>
    <property type="match status" value="3"/>
</dbReference>
<dbReference type="FunFam" id="2.70.150.10:FF:000160">
    <property type="entry name" value="Sarcoplasmic/endoplasmic reticulum calcium ATPase 1"/>
    <property type="match status" value="2"/>
</dbReference>
<dbReference type="Gene3D" id="3.40.1110.10">
    <property type="entry name" value="Calcium-transporting ATPase, cytoplasmic domain N"/>
    <property type="match status" value="1"/>
</dbReference>
<dbReference type="Gene3D" id="2.70.150.10">
    <property type="entry name" value="Calcium-transporting ATPase, cytoplasmic transduction domain A"/>
    <property type="match status" value="1"/>
</dbReference>
<dbReference type="Gene3D" id="1.20.1110.10">
    <property type="entry name" value="Calcium-transporting ATPase, transmembrane domain"/>
    <property type="match status" value="1"/>
</dbReference>
<dbReference type="Gene3D" id="3.40.50.1000">
    <property type="entry name" value="HAD superfamily/HAD-like"/>
    <property type="match status" value="1"/>
</dbReference>
<dbReference type="InterPro" id="IPR006068">
    <property type="entry name" value="ATPase_P-typ_cation-transptr_C"/>
</dbReference>
<dbReference type="InterPro" id="IPR004014">
    <property type="entry name" value="ATPase_P-typ_cation-transptr_N"/>
</dbReference>
<dbReference type="InterPro" id="IPR023299">
    <property type="entry name" value="ATPase_P-typ_cyto_dom_N"/>
</dbReference>
<dbReference type="InterPro" id="IPR018303">
    <property type="entry name" value="ATPase_P-typ_P_site"/>
</dbReference>
<dbReference type="InterPro" id="IPR023298">
    <property type="entry name" value="ATPase_P-typ_TM_dom_sf"/>
</dbReference>
<dbReference type="InterPro" id="IPR008250">
    <property type="entry name" value="ATPase_P-typ_transduc_dom_A_sf"/>
</dbReference>
<dbReference type="InterPro" id="IPR036412">
    <property type="entry name" value="HAD-like_sf"/>
</dbReference>
<dbReference type="InterPro" id="IPR023214">
    <property type="entry name" value="HAD_sf"/>
</dbReference>
<dbReference type="InterPro" id="IPR005782">
    <property type="entry name" value="P-type_ATPase_IIA"/>
</dbReference>
<dbReference type="InterPro" id="IPR001757">
    <property type="entry name" value="P_typ_ATPase"/>
</dbReference>
<dbReference type="InterPro" id="IPR044492">
    <property type="entry name" value="P_typ_ATPase_HD_dom"/>
</dbReference>
<dbReference type="NCBIfam" id="TIGR01116">
    <property type="entry name" value="ATPase-IIA1_Ca"/>
    <property type="match status" value="1"/>
</dbReference>
<dbReference type="NCBIfam" id="TIGR01494">
    <property type="entry name" value="ATPase_P-type"/>
    <property type="match status" value="2"/>
</dbReference>
<dbReference type="PANTHER" id="PTHR42861">
    <property type="entry name" value="CALCIUM-TRANSPORTING ATPASE"/>
    <property type="match status" value="1"/>
</dbReference>
<dbReference type="Pfam" id="PF13246">
    <property type="entry name" value="Cation_ATPase"/>
    <property type="match status" value="1"/>
</dbReference>
<dbReference type="Pfam" id="PF00689">
    <property type="entry name" value="Cation_ATPase_C"/>
    <property type="match status" value="1"/>
</dbReference>
<dbReference type="Pfam" id="PF00690">
    <property type="entry name" value="Cation_ATPase_N"/>
    <property type="match status" value="1"/>
</dbReference>
<dbReference type="Pfam" id="PF00122">
    <property type="entry name" value="E1-E2_ATPase"/>
    <property type="match status" value="1"/>
</dbReference>
<dbReference type="Pfam" id="PF00702">
    <property type="entry name" value="Hydrolase"/>
    <property type="match status" value="1"/>
</dbReference>
<dbReference type="PRINTS" id="PR00119">
    <property type="entry name" value="CATATPASE"/>
</dbReference>
<dbReference type="PRINTS" id="PR00120">
    <property type="entry name" value="HATPASE"/>
</dbReference>
<dbReference type="SFLD" id="SFLDS00003">
    <property type="entry name" value="Haloacid_Dehalogenase"/>
    <property type="match status" value="1"/>
</dbReference>
<dbReference type="SFLD" id="SFLDF00027">
    <property type="entry name" value="p-type_atpase"/>
    <property type="match status" value="1"/>
</dbReference>
<dbReference type="SMART" id="SM00831">
    <property type="entry name" value="Cation_ATPase_N"/>
    <property type="match status" value="1"/>
</dbReference>
<dbReference type="SUPFAM" id="SSF81653">
    <property type="entry name" value="Calcium ATPase, transduction domain A"/>
    <property type="match status" value="1"/>
</dbReference>
<dbReference type="SUPFAM" id="SSF81665">
    <property type="entry name" value="Calcium ATPase, transmembrane domain M"/>
    <property type="match status" value="1"/>
</dbReference>
<dbReference type="SUPFAM" id="SSF56784">
    <property type="entry name" value="HAD-like"/>
    <property type="match status" value="1"/>
</dbReference>
<dbReference type="SUPFAM" id="SSF81660">
    <property type="entry name" value="Metal cation-transporting ATPase, ATP-binding domain N"/>
    <property type="match status" value="1"/>
</dbReference>
<dbReference type="PROSITE" id="PS00154">
    <property type="entry name" value="ATPASE_E1_E2"/>
    <property type="match status" value="1"/>
</dbReference>
<evidence type="ECO:0000250" key="1">
    <source>
        <dbReference type="UniProtKB" id="P04191"/>
    </source>
</evidence>
<evidence type="ECO:0000250" key="2">
    <source>
        <dbReference type="UniProtKB" id="Q8R429"/>
    </source>
</evidence>
<evidence type="ECO:0000303" key="3">
    <source>
    </source>
</evidence>
<evidence type="ECO:0000305" key="4"/>
<organism>
    <name type="scientific">Makaira nigricans</name>
    <name type="common">Atlantic blue marlin</name>
    <dbReference type="NCBI Taxonomy" id="13604"/>
    <lineage>
        <taxon>Eukaryota</taxon>
        <taxon>Metazoa</taxon>
        <taxon>Chordata</taxon>
        <taxon>Craniata</taxon>
        <taxon>Vertebrata</taxon>
        <taxon>Euteleostomi</taxon>
        <taxon>Actinopterygii</taxon>
        <taxon>Neopterygii</taxon>
        <taxon>Teleostei</taxon>
        <taxon>Neoteleostei</taxon>
        <taxon>Acanthomorphata</taxon>
        <taxon>Carangaria</taxon>
        <taxon>Istiophoriformes</taxon>
        <taxon>Makaira</taxon>
    </lineage>
</organism>
<comment type="function">
    <text evidence="2">Key regulator of striated muscle performance by acting as the major Ca(2+) ATPase responsible for the reuptake of cytosolic Ca(2+) into the sarcoplasmic reticulum. Catalyzes the hydrolysis of ATP coupled with the translocation of calcium from the cytosol to the sarcoplasmic reticulum lumen. Contributes to calcium sequestration involved in muscular excitation/contraction.</text>
</comment>
<comment type="catalytic activity">
    <reaction evidence="1">
        <text>Ca(2+)(in) + ATP + H2O = Ca(2+)(out) + ADP + phosphate + H(+)</text>
        <dbReference type="Rhea" id="RHEA:18105"/>
        <dbReference type="ChEBI" id="CHEBI:15377"/>
        <dbReference type="ChEBI" id="CHEBI:15378"/>
        <dbReference type="ChEBI" id="CHEBI:29108"/>
        <dbReference type="ChEBI" id="CHEBI:30616"/>
        <dbReference type="ChEBI" id="CHEBI:43474"/>
        <dbReference type="ChEBI" id="CHEBI:456216"/>
        <dbReference type="EC" id="7.2.2.10"/>
    </reaction>
    <physiologicalReaction direction="left-to-right" evidence="1">
        <dbReference type="Rhea" id="RHEA:18106"/>
    </physiologicalReaction>
</comment>
<comment type="cofactor">
    <cofactor evidence="1">
        <name>Mg(2+)</name>
        <dbReference type="ChEBI" id="CHEBI:18420"/>
    </cofactor>
</comment>
<comment type="activity regulation">
    <text evidence="1 2">Inhibited by sarcolipin (SLN) and myoregulin (MRLN). Also shown to be inhibited by phospholamban (PLN) in vitro. Enhanced by DWORF; DWORF increases activity by displacing sarcolipin (SLN), phospholamban (PLN) and myoregulin (MRLN).</text>
</comment>
<comment type="subunit">
    <text evidence="2">Interacts with sarcolipin (SLN) (By similarity). Interacts with phospholamban (PLN) (By similarity). Interacts with myoregulin (MRLN). Interacts with DWORF (By similarity).</text>
</comment>
<comment type="subcellular location">
    <subcellularLocation>
        <location evidence="1">Endoplasmic reticulum membrane</location>
        <topology evidence="1">Multi-pass membrane protein</topology>
    </subcellularLocation>
    <subcellularLocation>
        <location evidence="1">Sarcoplasmic reticulum membrane</location>
        <topology evidence="1">Multi-pass membrane protein</topology>
    </subcellularLocation>
</comment>
<comment type="alternative products">
    <event type="alternative splicing"/>
    <isoform>
        <id>P70083-1</id>
        <name>SERCA1B</name>
        <name>ATP2A1B</name>
        <sequence type="displayed"/>
    </isoform>
    <isoform>
        <id>P70083-2</id>
        <name>SERCA1A</name>
        <name>ATP2A1A</name>
        <sequence type="described" ref="VSP_000357"/>
    </isoform>
</comment>
<comment type="domain">
    <text evidence="1">Ca(2+) and ATP binding cause major rearrangements of the cytoplasmic and transmembrane domains. According to the E1-E2 model, Ca(2+) binding to the cytosolic domain of the pump in the high-affinity E1 conformation is followed by the ATP-dependent phosphorylation of the active site Asp, giving rise to E1P. A conformational change of the phosphoenzyme gives rise to the low-affinity E2P state that exposes the Ca(2+) ions to the lumenal side and promotes Ca(2+) release. Dephosphorylation of the active site Asp mediates the subsequent return to the E1 conformation.</text>
</comment>
<comment type="domain">
    <text evidence="1">PLN and SLN both have a single transmembrane helix; both occupy a similar binding site on ATP2A1 that is situated between the ATP2A1 transmembrane helices.</text>
</comment>
<comment type="similarity">
    <text evidence="4">Belongs to the cation transport ATPase (P-type) (TC 3.A.3) family. Type IIA subfamily.</text>
</comment>
<keyword id="KW-0025">Alternative splicing</keyword>
<keyword id="KW-0067">ATP-binding</keyword>
<keyword id="KW-0106">Calcium</keyword>
<keyword id="KW-0109">Calcium transport</keyword>
<keyword id="KW-1015">Disulfide bond</keyword>
<keyword id="KW-0256">Endoplasmic reticulum</keyword>
<keyword id="KW-0406">Ion transport</keyword>
<keyword id="KW-0460">Magnesium</keyword>
<keyword id="KW-0472">Membrane</keyword>
<keyword id="KW-0479">Metal-binding</keyword>
<keyword id="KW-0547">Nucleotide-binding</keyword>
<keyword id="KW-0597">Phosphoprotein</keyword>
<keyword id="KW-0703">Sarcoplasmic reticulum</keyword>
<keyword id="KW-1278">Translocase</keyword>
<keyword id="KW-0812">Transmembrane</keyword>
<keyword id="KW-1133">Transmembrane helix</keyword>
<keyword id="KW-0813">Transport</keyword>
<sequence length="996" mass="109247">MENAHTKSPAECLSYFGVNEHTGLSPDQFKKNLDKFGYNELPAEEGKSIWDLIVEQFEDLLVRILLLAACISFVLAWFEEGEETITAFVEPFVILLILIANAIVGVWQERNAEDAIEALKEYEPEMGKVYRSDRKSVQRIKAREIVPGDIVEVSVGDKVPADIRIVSIKSTTLRVDQSILTGESVSVIKHTESVPDPRAVNQDKKNMLFSGTNIAAGKAIGVAIATGVSTEIGKIRDQMAATEQEKTPLQAKLDEFGEQLSKVISLICVAVWAINIGHFNDPVHGGSWIRGAVYYFKIAVALAVAAIPEGLPAVITTCLALGTRRMAKKNAIVRSLPSVETLGCTSVICSDKTGTLTTNQMCVTKMFIVKSVDGDHVDLNAFDISGSKYTPEGEVSHGGSKTNCSAYDGLVELATICALCNDSSLDYNESKKIYEKVGEATETALCCLVEKMNVFNSNVKNLSRIERANACCTVIKQLMKKNFTLEFSRDRKSMSVYCTPAKGDGGAKMFVKGAPEGVIDRCAYVRVGTTRVPLTSAIKEKIMAVIRDWGTGRDTLRCLALATRDTPLKVEEMNLEDSTKFADYETDMTFVGCVGMLDPPRKEVTGSIELCRDAGIRVIMITGDNKGTAIAICRRIGIFKEDEDVSNKAYTGREFDDLPSQDQAEAVRRACCFARVEPSHKSKIVEFLQGNDDITAMTGDGVNDAPALKKAEIGIAMGSGTAVAKSASEMVLADDNFSSIVAAVEEGRAIYNNMKQFIRYLISSNVGEVVCIFLTAALGLPEALIPVQLLWVNLVTDGLPATALGFNPPDLDIMGKPPRSPKEPLISGWLFFRYMAIGGYVGAATVGGAAWWFLYDSTGPAVTYYQLSHFMQCHNHNEDFTGVDCDIFEASPPMTMALSVLVTIEMCNALNSLSENQSLIRMPPWSNLWLMAAMTLSMSLHFMIIYVDPLPMIFKLTHLTFDQWLMVFKLSFPVILIDEVLKFFARNYIETGKEVK</sequence>